<accession>D5W6H7</accession>
<sequence>MASKSVVLEAREITLAIELIELGARLQLLEAETSLSRDRLVKLYKELKGVSPPKGMLPFSTDWFMTWQPNFHSSLFYNIYRFMAGHGGCRAIESIVKSYRLYLEHVQLQDDEPVLSLTRAWTLVRFFDSGMLQLSVCRRCGGQFVAHAHDPQHAFVCGLCQPPSRAGKTKKAAQTRPERQSAVAGIPAEVPQVAEARAHEARCTAPTLDTFVTAEV</sequence>
<comment type="function">
    <text evidence="1">Functions in complex with FlhD as a master transcriptional regulator that regulates transcription of several flagellar and non-flagellar operons by binding to their promoter region. Activates expression of class 2 flagellar genes, including fliA, which is a flagellum-specific sigma factor that turns on the class 3 genes. Also regulates genes whose products function in a variety of physiological pathways.</text>
</comment>
<comment type="cofactor">
    <cofactor evidence="1">
        <name>Zn(2+)</name>
        <dbReference type="ChEBI" id="CHEBI:29105"/>
    </cofactor>
    <text evidence="1">Binds 1 zinc ion per subunit.</text>
</comment>
<comment type="subunit">
    <text evidence="1">Heterohexamer composed of two FlhC and four FlhD subunits. Each FlhC binds a FlhD dimer, forming a heterotrimer, and a hexamer assembles by dimerization of two heterotrimers.</text>
</comment>
<comment type="subcellular location">
    <subcellularLocation>
        <location evidence="1">Cytoplasm</location>
    </subcellularLocation>
</comment>
<comment type="similarity">
    <text evidence="1">Belongs to the FlhC family.</text>
</comment>
<evidence type="ECO:0000255" key="1">
    <source>
        <dbReference type="HAMAP-Rule" id="MF_01891"/>
    </source>
</evidence>
<reference key="1">
    <citation type="submission" date="2010-04" db="EMBL/GenBank/DDBJ databases">
        <title>Complete sequence of chromosome 1 of Burkholderia sp. CCGE1002.</title>
        <authorList>
            <consortium name="US DOE Joint Genome Institute"/>
            <person name="Lucas S."/>
            <person name="Copeland A."/>
            <person name="Lapidus A."/>
            <person name="Cheng J.-F."/>
            <person name="Bruce D."/>
            <person name="Goodwin L."/>
            <person name="Pitluck S."/>
            <person name="Chertkov O."/>
            <person name="Detter J.C."/>
            <person name="Han C."/>
            <person name="Tapia R."/>
            <person name="Land M."/>
            <person name="Hauser L."/>
            <person name="Kyrpides N."/>
            <person name="Ovchinnikova G."/>
            <person name="Martinez-Romero E."/>
            <person name="Hernandez M.A.R."/>
            <person name="Tiedje J.M."/>
            <person name="Woyke T."/>
        </authorList>
    </citation>
    <scope>NUCLEOTIDE SEQUENCE [LARGE SCALE GENOMIC DNA]</scope>
    <source>
        <strain>CCGE1002</strain>
    </source>
</reference>
<name>FLHC_PARAM</name>
<dbReference type="EMBL" id="CP002013">
    <property type="protein sequence ID" value="ADG17098.1"/>
    <property type="molecule type" value="Genomic_DNA"/>
</dbReference>
<dbReference type="RefSeq" id="WP_013090905.1">
    <property type="nucleotide sequence ID" value="NC_014117.1"/>
</dbReference>
<dbReference type="SMR" id="D5W6H7"/>
<dbReference type="STRING" id="640511.BC1002_3053"/>
<dbReference type="KEGG" id="bge:BC1002_3053"/>
<dbReference type="eggNOG" id="ENOG502Z927">
    <property type="taxonomic scope" value="Bacteria"/>
</dbReference>
<dbReference type="HOGENOM" id="CLU_122824_0_0_4"/>
<dbReference type="Proteomes" id="UP000002190">
    <property type="component" value="Chromosome 1"/>
</dbReference>
<dbReference type="GO" id="GO:0005737">
    <property type="term" value="C:cytoplasm"/>
    <property type="evidence" value="ECO:0007669"/>
    <property type="project" value="UniProtKB-SubCell"/>
</dbReference>
<dbReference type="GO" id="GO:0003677">
    <property type="term" value="F:DNA binding"/>
    <property type="evidence" value="ECO:0007669"/>
    <property type="project" value="UniProtKB-UniRule"/>
</dbReference>
<dbReference type="GO" id="GO:0008270">
    <property type="term" value="F:zinc ion binding"/>
    <property type="evidence" value="ECO:0007669"/>
    <property type="project" value="UniProtKB-UniRule"/>
</dbReference>
<dbReference type="GO" id="GO:0044781">
    <property type="term" value="P:bacterial-type flagellum organization"/>
    <property type="evidence" value="ECO:0007669"/>
    <property type="project" value="UniProtKB-KW"/>
</dbReference>
<dbReference type="GO" id="GO:0045893">
    <property type="term" value="P:positive regulation of DNA-templated transcription"/>
    <property type="evidence" value="ECO:0007669"/>
    <property type="project" value="InterPro"/>
</dbReference>
<dbReference type="GO" id="GO:1902208">
    <property type="term" value="P:regulation of bacterial-type flagellum assembly"/>
    <property type="evidence" value="ECO:0007669"/>
    <property type="project" value="UniProtKB-UniRule"/>
</dbReference>
<dbReference type="HAMAP" id="MF_01891">
    <property type="entry name" value="FhlC"/>
    <property type="match status" value="1"/>
</dbReference>
<dbReference type="InterPro" id="IPR007944">
    <property type="entry name" value="FlhC"/>
</dbReference>
<dbReference type="NCBIfam" id="NF009365">
    <property type="entry name" value="PRK12722.1"/>
    <property type="match status" value="1"/>
</dbReference>
<dbReference type="Pfam" id="PF05280">
    <property type="entry name" value="FlhC"/>
    <property type="match status" value="1"/>
</dbReference>
<dbReference type="PIRSF" id="PIRSF003159">
    <property type="entry name" value="FlhC"/>
    <property type="match status" value="1"/>
</dbReference>
<dbReference type="SUPFAM" id="SSF160930">
    <property type="entry name" value="FlhC-like"/>
    <property type="match status" value="1"/>
</dbReference>
<gene>
    <name evidence="1" type="primary">flhC</name>
    <name type="ordered locus">BC1002_3053</name>
</gene>
<proteinExistence type="inferred from homology"/>
<keyword id="KW-0010">Activator</keyword>
<keyword id="KW-1005">Bacterial flagellum biogenesis</keyword>
<keyword id="KW-0963">Cytoplasm</keyword>
<keyword id="KW-0238">DNA-binding</keyword>
<keyword id="KW-0479">Metal-binding</keyword>
<keyword id="KW-0804">Transcription</keyword>
<keyword id="KW-0805">Transcription regulation</keyword>
<keyword id="KW-0862">Zinc</keyword>
<feature type="chain" id="PRO_0000406757" description="Flagellar transcriptional regulator FlhC">
    <location>
        <begin position="1"/>
        <end position="216"/>
    </location>
</feature>
<feature type="binding site" evidence="1">
    <location>
        <position position="137"/>
    </location>
    <ligand>
        <name>Zn(2+)</name>
        <dbReference type="ChEBI" id="CHEBI:29105"/>
    </ligand>
</feature>
<feature type="binding site" evidence="1">
    <location>
        <position position="140"/>
    </location>
    <ligand>
        <name>Zn(2+)</name>
        <dbReference type="ChEBI" id="CHEBI:29105"/>
    </ligand>
</feature>
<feature type="binding site" evidence="1">
    <location>
        <position position="157"/>
    </location>
    <ligand>
        <name>Zn(2+)</name>
        <dbReference type="ChEBI" id="CHEBI:29105"/>
    </ligand>
</feature>
<feature type="binding site" evidence="1">
    <location>
        <position position="160"/>
    </location>
    <ligand>
        <name>Zn(2+)</name>
        <dbReference type="ChEBI" id="CHEBI:29105"/>
    </ligand>
</feature>
<protein>
    <recommendedName>
        <fullName evidence="1">Flagellar transcriptional regulator FlhC</fullName>
    </recommendedName>
</protein>
<organism>
    <name type="scientific">Paraburkholderia atlantica</name>
    <dbReference type="NCBI Taxonomy" id="2654982"/>
    <lineage>
        <taxon>Bacteria</taxon>
        <taxon>Pseudomonadati</taxon>
        <taxon>Pseudomonadota</taxon>
        <taxon>Betaproteobacteria</taxon>
        <taxon>Burkholderiales</taxon>
        <taxon>Burkholderiaceae</taxon>
        <taxon>Paraburkholderia</taxon>
    </lineage>
</organism>